<keyword id="KW-0963">Cytoplasm</keyword>
<keyword id="KW-0489">Methyltransferase</keyword>
<keyword id="KW-1185">Reference proteome</keyword>
<keyword id="KW-0694">RNA-binding</keyword>
<keyword id="KW-0698">rRNA processing</keyword>
<keyword id="KW-0949">S-adenosyl-L-methionine</keyword>
<keyword id="KW-0808">Transferase</keyword>
<gene>
    <name evidence="1" type="primary">rsmA</name>
    <name evidence="1" type="synonym">ksgA</name>
    <name type="ordered locus">PF1863</name>
</gene>
<comment type="function">
    <text evidence="1">Specifically dimethylates two adjacent adenosines in the loop of a conserved hairpin near the 3'-end of 16S rRNA in the 30S particle. May play a critical role in biogenesis of 30S subunits.</text>
</comment>
<comment type="subcellular location">
    <subcellularLocation>
        <location evidence="1">Cytoplasm</location>
    </subcellularLocation>
</comment>
<comment type="similarity">
    <text evidence="1">Belongs to the class I-like SAM-binding methyltransferase superfamily. rRNA adenine N(6)-methyltransferase family. RsmA subfamily.</text>
</comment>
<accession>Q8TH24</accession>
<reference key="1">
    <citation type="journal article" date="1999" name="Genetics">
        <title>Divergence of the hyperthermophilic archaea Pyrococcus furiosus and P. horikoshii inferred from complete genomic sequences.</title>
        <authorList>
            <person name="Maeder D.L."/>
            <person name="Weiss R.B."/>
            <person name="Dunn D.M."/>
            <person name="Cherry J.L."/>
            <person name="Gonzalez J.M."/>
            <person name="DiRuggiero J."/>
            <person name="Robb F.T."/>
        </authorList>
    </citation>
    <scope>NUCLEOTIDE SEQUENCE [LARGE SCALE GENOMIC DNA]</scope>
    <source>
        <strain>ATCC 43587 / DSM 3638 / JCM 8422 / Vc1</strain>
    </source>
</reference>
<dbReference type="EC" id="2.1.1.-" evidence="1"/>
<dbReference type="EMBL" id="AE009950">
    <property type="protein sequence ID" value="AAL81987.1"/>
    <property type="molecule type" value="Genomic_DNA"/>
</dbReference>
<dbReference type="RefSeq" id="WP_011013003.1">
    <property type="nucleotide sequence ID" value="NZ_CP023154.1"/>
</dbReference>
<dbReference type="SMR" id="Q8TH24"/>
<dbReference type="STRING" id="186497.PF1863"/>
<dbReference type="PaxDb" id="186497-PF1863"/>
<dbReference type="GeneID" id="41713683"/>
<dbReference type="KEGG" id="pfu:PF1863"/>
<dbReference type="PATRIC" id="fig|186497.12.peg.1933"/>
<dbReference type="eggNOG" id="arCOG04131">
    <property type="taxonomic scope" value="Archaea"/>
</dbReference>
<dbReference type="HOGENOM" id="CLU_041220_0_2_2"/>
<dbReference type="OrthoDB" id="9883at2157"/>
<dbReference type="PhylomeDB" id="Q8TH24"/>
<dbReference type="Proteomes" id="UP000001013">
    <property type="component" value="Chromosome"/>
</dbReference>
<dbReference type="GO" id="GO:0005737">
    <property type="term" value="C:cytoplasm"/>
    <property type="evidence" value="ECO:0007669"/>
    <property type="project" value="UniProtKB-SubCell"/>
</dbReference>
<dbReference type="GO" id="GO:0003723">
    <property type="term" value="F:RNA binding"/>
    <property type="evidence" value="ECO:0007669"/>
    <property type="project" value="UniProtKB-KW"/>
</dbReference>
<dbReference type="GO" id="GO:0000179">
    <property type="term" value="F:rRNA (adenine-N6,N6-)-dimethyltransferase activity"/>
    <property type="evidence" value="ECO:0007669"/>
    <property type="project" value="InterPro"/>
</dbReference>
<dbReference type="CDD" id="cd02440">
    <property type="entry name" value="AdoMet_MTases"/>
    <property type="match status" value="1"/>
</dbReference>
<dbReference type="FunFam" id="3.40.50.150:FF:000023">
    <property type="entry name" value="Ribosomal RNA small subunit methyltransferase A"/>
    <property type="match status" value="1"/>
</dbReference>
<dbReference type="Gene3D" id="1.10.8.100">
    <property type="entry name" value="Ribosomal RNA adenine dimethylase-like, domain 2"/>
    <property type="match status" value="1"/>
</dbReference>
<dbReference type="Gene3D" id="3.40.50.150">
    <property type="entry name" value="Vaccinia Virus protein VP39"/>
    <property type="match status" value="1"/>
</dbReference>
<dbReference type="HAMAP" id="MF_00607">
    <property type="entry name" value="16SrRNA_methyltr_A"/>
    <property type="match status" value="1"/>
</dbReference>
<dbReference type="InterPro" id="IPR001737">
    <property type="entry name" value="KsgA/Erm"/>
</dbReference>
<dbReference type="InterPro" id="IPR023165">
    <property type="entry name" value="rRNA_Ade_diMease-like_C"/>
</dbReference>
<dbReference type="InterPro" id="IPR020596">
    <property type="entry name" value="rRNA_Ade_Mease_Trfase_CS"/>
</dbReference>
<dbReference type="InterPro" id="IPR020598">
    <property type="entry name" value="rRNA_Ade_methylase_Trfase_N"/>
</dbReference>
<dbReference type="InterPro" id="IPR011530">
    <property type="entry name" value="rRNA_adenine_dimethylase"/>
</dbReference>
<dbReference type="InterPro" id="IPR029063">
    <property type="entry name" value="SAM-dependent_MTases_sf"/>
</dbReference>
<dbReference type="NCBIfam" id="TIGR00755">
    <property type="entry name" value="ksgA"/>
    <property type="match status" value="1"/>
</dbReference>
<dbReference type="PANTHER" id="PTHR11727">
    <property type="entry name" value="DIMETHYLADENOSINE TRANSFERASE"/>
    <property type="match status" value="1"/>
</dbReference>
<dbReference type="PANTHER" id="PTHR11727:SF7">
    <property type="entry name" value="DIMETHYLADENOSINE TRANSFERASE-RELATED"/>
    <property type="match status" value="1"/>
</dbReference>
<dbReference type="Pfam" id="PF00398">
    <property type="entry name" value="RrnaAD"/>
    <property type="match status" value="1"/>
</dbReference>
<dbReference type="SMART" id="SM00650">
    <property type="entry name" value="rADc"/>
    <property type="match status" value="1"/>
</dbReference>
<dbReference type="SUPFAM" id="SSF53335">
    <property type="entry name" value="S-adenosyl-L-methionine-dependent methyltransferases"/>
    <property type="match status" value="1"/>
</dbReference>
<dbReference type="PROSITE" id="PS01131">
    <property type="entry name" value="RRNA_A_DIMETH"/>
    <property type="match status" value="1"/>
</dbReference>
<dbReference type="PROSITE" id="PS51689">
    <property type="entry name" value="SAM_RNA_A_N6_MT"/>
    <property type="match status" value="1"/>
</dbReference>
<sequence length="273" mass="31627">MRDKLFYFLSKYNFSPRDKIGQNFLIMRDVIIKAVETSEIKKSDVVLEVGPGFGFLTDELSKRAGKVYAIELDKRIIEILENEYNWENVEIIQGDAVKIEWPEFNKVVSNIPYQISSPFTFKLLKHDFEKAVVMYQLEFAKRMVAKPGDRNYSRLSLMVNALANAKIVMKIGRGAFYPKPKVDSALVLIVPKPKDERIELNENLVKALFQHRRKLVSKALKESCHMLGINKKELKTLKNILENVPHAKKRVFELTPEEVKEIEEFLKIQGIIN</sequence>
<feature type="chain" id="PRO_0000101663" description="Probable ribosomal RNA small subunit methyltransferase A">
    <location>
        <begin position="1"/>
        <end position="273"/>
    </location>
</feature>
<feature type="binding site" evidence="1">
    <location>
        <position position="23"/>
    </location>
    <ligand>
        <name>S-adenosyl-L-methionine</name>
        <dbReference type="ChEBI" id="CHEBI:59789"/>
    </ligand>
</feature>
<feature type="binding site" evidence="1">
    <location>
        <position position="25"/>
    </location>
    <ligand>
        <name>S-adenosyl-L-methionine</name>
        <dbReference type="ChEBI" id="CHEBI:59789"/>
    </ligand>
</feature>
<feature type="binding site" evidence="1">
    <location>
        <position position="50"/>
    </location>
    <ligand>
        <name>S-adenosyl-L-methionine</name>
        <dbReference type="ChEBI" id="CHEBI:59789"/>
    </ligand>
</feature>
<feature type="binding site" evidence="1">
    <location>
        <position position="71"/>
    </location>
    <ligand>
        <name>S-adenosyl-L-methionine</name>
        <dbReference type="ChEBI" id="CHEBI:59789"/>
    </ligand>
</feature>
<feature type="binding site" evidence="1">
    <location>
        <position position="95"/>
    </location>
    <ligand>
        <name>S-adenosyl-L-methionine</name>
        <dbReference type="ChEBI" id="CHEBI:59789"/>
    </ligand>
</feature>
<feature type="binding site" evidence="1">
    <location>
        <position position="110"/>
    </location>
    <ligand>
        <name>S-adenosyl-L-methionine</name>
        <dbReference type="ChEBI" id="CHEBI:59789"/>
    </ligand>
</feature>
<proteinExistence type="inferred from homology"/>
<protein>
    <recommendedName>
        <fullName evidence="1">Probable ribosomal RNA small subunit methyltransferase A</fullName>
        <ecNumber evidence="1">2.1.1.-</ecNumber>
    </recommendedName>
    <alternativeName>
        <fullName evidence="1">16S rRNA dimethyladenosine transferase</fullName>
    </alternativeName>
    <alternativeName>
        <fullName evidence="1">16S rRNA dimethylase</fullName>
    </alternativeName>
    <alternativeName>
        <fullName evidence="1">S-adenosylmethionine-6-N',N'-adenosyl(rRNA) dimethyltransferase</fullName>
    </alternativeName>
</protein>
<organism>
    <name type="scientific">Pyrococcus furiosus (strain ATCC 43587 / DSM 3638 / JCM 8422 / Vc1)</name>
    <dbReference type="NCBI Taxonomy" id="186497"/>
    <lineage>
        <taxon>Archaea</taxon>
        <taxon>Methanobacteriati</taxon>
        <taxon>Methanobacteriota</taxon>
        <taxon>Thermococci</taxon>
        <taxon>Thermococcales</taxon>
        <taxon>Thermococcaceae</taxon>
        <taxon>Pyrococcus</taxon>
    </lineage>
</organism>
<evidence type="ECO:0000255" key="1">
    <source>
        <dbReference type="HAMAP-Rule" id="MF_00607"/>
    </source>
</evidence>
<name>RSMA_PYRFU</name>